<proteinExistence type="inferred from homology"/>
<feature type="chain" id="PRO_0000080136" description="Fructokinase">
    <location>
        <begin position="1"/>
        <end position="326"/>
    </location>
</feature>
<feature type="region of interest" description="Disordered" evidence="1">
    <location>
        <begin position="275"/>
        <end position="326"/>
    </location>
</feature>
<feature type="compositionally biased region" description="Basic residues" evidence="1">
    <location>
        <begin position="287"/>
        <end position="299"/>
    </location>
</feature>
<feature type="compositionally biased region" description="Basic and acidic residues" evidence="1">
    <location>
        <begin position="307"/>
        <end position="326"/>
    </location>
</feature>
<reference key="1">
    <citation type="journal article" date="1996" name="Microbiology">
        <title>The fructokinase from Rhizobium leguminosarum biovar trifolii belongs to group I fructokinase enzymes and is encoded separately from other carbohydrate metabolism enzymes.</title>
        <authorList>
            <person name="Fennington G.J."/>
            <person name="Hughes T.A."/>
        </authorList>
    </citation>
    <scope>NUCLEOTIDE SEQUENCE [GENOMIC DNA]</scope>
</reference>
<sequence>MILCCGEALIDMLPRDTTLGEKGFAPYAGGAIFNTAIALGRLGIPTAFFTGIADDMMGEILLETLKASNVDYSPCAITPRPSTIAFVKLVNGQATYAFYDEGTAGRMITTADLPDLGDDCEALHFGAISLIPSPCGETYEALLDREAASRVISLDPNIRPGFIKDKPSHMARIKRMAAKSDIVKFSDEDLDWFGLQGDHDALAAHWLNHGAKLVVITKGAEGASGYTKDRKVTVPSERVTVVDTVGAGDTFDAGILASLKMDNLLTKRQVASLDEQALRNGPDPRRQSRRRHRLPRRRQSTLGARDWSLRLEQDSDPHPPDDTFSP</sequence>
<dbReference type="EC" id="2.7.1.4"/>
<dbReference type="EMBL" id="U08434">
    <property type="protein sequence ID" value="AAB52373.1"/>
    <property type="molecule type" value="Unassigned_DNA"/>
</dbReference>
<dbReference type="SMR" id="P42720"/>
<dbReference type="GO" id="GO:0005524">
    <property type="term" value="F:ATP binding"/>
    <property type="evidence" value="ECO:0007669"/>
    <property type="project" value="UniProtKB-KW"/>
</dbReference>
<dbReference type="GO" id="GO:0008865">
    <property type="term" value="F:fructokinase activity"/>
    <property type="evidence" value="ECO:0007669"/>
    <property type="project" value="UniProtKB-EC"/>
</dbReference>
<dbReference type="CDD" id="cd01167">
    <property type="entry name" value="bac_FRK"/>
    <property type="match status" value="1"/>
</dbReference>
<dbReference type="Gene3D" id="3.40.1190.20">
    <property type="match status" value="1"/>
</dbReference>
<dbReference type="InterPro" id="IPR002173">
    <property type="entry name" value="Carboh/pur_kinase_PfkB_CS"/>
</dbReference>
<dbReference type="InterPro" id="IPR050306">
    <property type="entry name" value="PfkB_Carbo_kinase"/>
</dbReference>
<dbReference type="InterPro" id="IPR011611">
    <property type="entry name" value="PfkB_dom"/>
</dbReference>
<dbReference type="InterPro" id="IPR029056">
    <property type="entry name" value="Ribokinase-like"/>
</dbReference>
<dbReference type="PANTHER" id="PTHR43085">
    <property type="entry name" value="HEXOKINASE FAMILY MEMBER"/>
    <property type="match status" value="1"/>
</dbReference>
<dbReference type="PANTHER" id="PTHR43085:SF1">
    <property type="entry name" value="PSEUDOURIDINE KINASE-RELATED"/>
    <property type="match status" value="1"/>
</dbReference>
<dbReference type="Pfam" id="PF00294">
    <property type="entry name" value="PfkB"/>
    <property type="match status" value="1"/>
</dbReference>
<dbReference type="SUPFAM" id="SSF53613">
    <property type="entry name" value="Ribokinase-like"/>
    <property type="match status" value="1"/>
</dbReference>
<dbReference type="PROSITE" id="PS00584">
    <property type="entry name" value="PFKB_KINASES_2"/>
    <property type="match status" value="1"/>
</dbReference>
<gene>
    <name type="primary">frk</name>
</gene>
<organism>
    <name type="scientific">Rhizobium leguminosarum bv. trifolii</name>
    <dbReference type="NCBI Taxonomy" id="386"/>
    <lineage>
        <taxon>Bacteria</taxon>
        <taxon>Pseudomonadati</taxon>
        <taxon>Pseudomonadota</taxon>
        <taxon>Alphaproteobacteria</taxon>
        <taxon>Hyphomicrobiales</taxon>
        <taxon>Rhizobiaceae</taxon>
        <taxon>Rhizobium/Agrobacterium group</taxon>
        <taxon>Rhizobium</taxon>
    </lineage>
</organism>
<keyword id="KW-0067">ATP-binding</keyword>
<keyword id="KW-0119">Carbohydrate metabolism</keyword>
<keyword id="KW-0418">Kinase</keyword>
<keyword id="KW-0547">Nucleotide-binding</keyword>
<keyword id="KW-0808">Transferase</keyword>
<evidence type="ECO:0000256" key="1">
    <source>
        <dbReference type="SAM" id="MobiDB-lite"/>
    </source>
</evidence>
<evidence type="ECO:0000305" key="2"/>
<name>SCRK_RHILT</name>
<comment type="catalytic activity">
    <reaction>
        <text>D-fructose + ATP = D-fructose 6-phosphate + ADP + H(+)</text>
        <dbReference type="Rhea" id="RHEA:16125"/>
        <dbReference type="ChEBI" id="CHEBI:15378"/>
        <dbReference type="ChEBI" id="CHEBI:30616"/>
        <dbReference type="ChEBI" id="CHEBI:37721"/>
        <dbReference type="ChEBI" id="CHEBI:61527"/>
        <dbReference type="ChEBI" id="CHEBI:456216"/>
        <dbReference type="EC" id="2.7.1.4"/>
    </reaction>
</comment>
<comment type="similarity">
    <text evidence="2">Belongs to the carbohydrate kinase PfkB family.</text>
</comment>
<accession>P42720</accession>
<protein>
    <recommendedName>
        <fullName>Fructokinase</fullName>
        <ecNumber>2.7.1.4</ecNumber>
    </recommendedName>
</protein>